<organism>
    <name type="scientific">Arabidopsis thaliana</name>
    <name type="common">Mouse-ear cress</name>
    <dbReference type="NCBI Taxonomy" id="3702"/>
    <lineage>
        <taxon>Eukaryota</taxon>
        <taxon>Viridiplantae</taxon>
        <taxon>Streptophyta</taxon>
        <taxon>Embryophyta</taxon>
        <taxon>Tracheophyta</taxon>
        <taxon>Spermatophyta</taxon>
        <taxon>Magnoliopsida</taxon>
        <taxon>eudicotyledons</taxon>
        <taxon>Gunneridae</taxon>
        <taxon>Pentapetalae</taxon>
        <taxon>rosids</taxon>
        <taxon>malvids</taxon>
        <taxon>Brassicales</taxon>
        <taxon>Brassicaceae</taxon>
        <taxon>Camelineae</taxon>
        <taxon>Arabidopsis</taxon>
    </lineage>
</organism>
<reference key="1">
    <citation type="journal article" date="2000" name="Nature">
        <title>Sequence and analysis of chromosome 3 of the plant Arabidopsis thaliana.</title>
        <authorList>
            <person name="Salanoubat M."/>
            <person name="Lemcke K."/>
            <person name="Rieger M."/>
            <person name="Ansorge W."/>
            <person name="Unseld M."/>
            <person name="Fartmann B."/>
            <person name="Valle G."/>
            <person name="Bloecker H."/>
            <person name="Perez-Alonso M."/>
            <person name="Obermaier B."/>
            <person name="Delseny M."/>
            <person name="Boutry M."/>
            <person name="Grivell L.A."/>
            <person name="Mache R."/>
            <person name="Puigdomenech P."/>
            <person name="De Simone V."/>
            <person name="Choisne N."/>
            <person name="Artiguenave F."/>
            <person name="Robert C."/>
            <person name="Brottier P."/>
            <person name="Wincker P."/>
            <person name="Cattolico L."/>
            <person name="Weissenbach J."/>
            <person name="Saurin W."/>
            <person name="Quetier F."/>
            <person name="Schaefer M."/>
            <person name="Mueller-Auer S."/>
            <person name="Gabel C."/>
            <person name="Fuchs M."/>
            <person name="Benes V."/>
            <person name="Wurmbach E."/>
            <person name="Drzonek H."/>
            <person name="Erfle H."/>
            <person name="Jordan N."/>
            <person name="Bangert S."/>
            <person name="Wiedelmann R."/>
            <person name="Kranz H."/>
            <person name="Voss H."/>
            <person name="Holland R."/>
            <person name="Brandt P."/>
            <person name="Nyakatura G."/>
            <person name="Vezzi A."/>
            <person name="D'Angelo M."/>
            <person name="Pallavicini A."/>
            <person name="Toppo S."/>
            <person name="Simionati B."/>
            <person name="Conrad A."/>
            <person name="Hornischer K."/>
            <person name="Kauer G."/>
            <person name="Loehnert T.-H."/>
            <person name="Nordsiek G."/>
            <person name="Reichelt J."/>
            <person name="Scharfe M."/>
            <person name="Schoen O."/>
            <person name="Bargues M."/>
            <person name="Terol J."/>
            <person name="Climent J."/>
            <person name="Navarro P."/>
            <person name="Collado C."/>
            <person name="Perez-Perez A."/>
            <person name="Ottenwaelder B."/>
            <person name="Duchemin D."/>
            <person name="Cooke R."/>
            <person name="Laudie M."/>
            <person name="Berger-Llauro C."/>
            <person name="Purnelle B."/>
            <person name="Masuy D."/>
            <person name="de Haan M."/>
            <person name="Maarse A.C."/>
            <person name="Alcaraz J.-P."/>
            <person name="Cottet A."/>
            <person name="Casacuberta E."/>
            <person name="Monfort A."/>
            <person name="Argiriou A."/>
            <person name="Flores M."/>
            <person name="Liguori R."/>
            <person name="Vitale D."/>
            <person name="Mannhaupt G."/>
            <person name="Haase D."/>
            <person name="Schoof H."/>
            <person name="Rudd S."/>
            <person name="Zaccaria P."/>
            <person name="Mewes H.-W."/>
            <person name="Mayer K.F.X."/>
            <person name="Kaul S."/>
            <person name="Town C.D."/>
            <person name="Koo H.L."/>
            <person name="Tallon L.J."/>
            <person name="Jenkins J."/>
            <person name="Rooney T."/>
            <person name="Rizzo M."/>
            <person name="Walts A."/>
            <person name="Utterback T."/>
            <person name="Fujii C.Y."/>
            <person name="Shea T.P."/>
            <person name="Creasy T.H."/>
            <person name="Haas B."/>
            <person name="Maiti R."/>
            <person name="Wu D."/>
            <person name="Peterson J."/>
            <person name="Van Aken S."/>
            <person name="Pai G."/>
            <person name="Militscher J."/>
            <person name="Sellers P."/>
            <person name="Gill J.E."/>
            <person name="Feldblyum T.V."/>
            <person name="Preuss D."/>
            <person name="Lin X."/>
            <person name="Nierman W.C."/>
            <person name="Salzberg S.L."/>
            <person name="White O."/>
            <person name="Venter J.C."/>
            <person name="Fraser C.M."/>
            <person name="Kaneko T."/>
            <person name="Nakamura Y."/>
            <person name="Sato S."/>
            <person name="Kato T."/>
            <person name="Asamizu E."/>
            <person name="Sasamoto S."/>
            <person name="Kimura T."/>
            <person name="Idesawa K."/>
            <person name="Kawashima K."/>
            <person name="Kishida Y."/>
            <person name="Kiyokawa C."/>
            <person name="Kohara M."/>
            <person name="Matsumoto M."/>
            <person name="Matsuno A."/>
            <person name="Muraki A."/>
            <person name="Nakayama S."/>
            <person name="Nakazaki N."/>
            <person name="Shinpo S."/>
            <person name="Takeuchi C."/>
            <person name="Wada T."/>
            <person name="Watanabe A."/>
            <person name="Yamada M."/>
            <person name="Yasuda M."/>
            <person name="Tabata S."/>
        </authorList>
    </citation>
    <scope>NUCLEOTIDE SEQUENCE [LARGE SCALE GENOMIC DNA]</scope>
    <source>
        <strain>cv. Columbia</strain>
    </source>
</reference>
<reference key="2">
    <citation type="journal article" date="2017" name="Plant J.">
        <title>Araport11: a complete reannotation of the Arabidopsis thaliana reference genome.</title>
        <authorList>
            <person name="Cheng C.Y."/>
            <person name="Krishnakumar V."/>
            <person name="Chan A.P."/>
            <person name="Thibaud-Nissen F."/>
            <person name="Schobel S."/>
            <person name="Town C.D."/>
        </authorList>
    </citation>
    <scope>GENOME REANNOTATION</scope>
    <source>
        <strain>cv. Columbia</strain>
    </source>
</reference>
<reference key="3">
    <citation type="journal article" date="2010" name="BMC Genomics">
        <title>Genome-wide cloning and sequence analysis of leucine-rich repeat receptor-like protein kinase genes in Arabidopsis thaliana.</title>
        <authorList>
            <person name="Gou X."/>
            <person name="He K."/>
            <person name="Yang H."/>
            <person name="Yuan T."/>
            <person name="Lin H."/>
            <person name="Clouse S.D."/>
            <person name="Li J."/>
        </authorList>
    </citation>
    <scope>NUCLEOTIDE SEQUENCE [LARGE SCALE MRNA]</scope>
    <source>
        <strain>cv. Columbia</strain>
    </source>
</reference>
<reference key="4">
    <citation type="journal article" date="2002" name="Science">
        <title>Functional annotation of a full-length Arabidopsis cDNA collection.</title>
        <authorList>
            <person name="Seki M."/>
            <person name="Narusaka M."/>
            <person name="Kamiya A."/>
            <person name="Ishida J."/>
            <person name="Satou M."/>
            <person name="Sakurai T."/>
            <person name="Nakajima M."/>
            <person name="Enju A."/>
            <person name="Akiyama K."/>
            <person name="Oono Y."/>
            <person name="Muramatsu M."/>
            <person name="Hayashizaki Y."/>
            <person name="Kawai J."/>
            <person name="Carninci P."/>
            <person name="Itoh M."/>
            <person name="Ishii Y."/>
            <person name="Arakawa T."/>
            <person name="Shibata K."/>
            <person name="Shinagawa A."/>
            <person name="Shinozaki K."/>
        </authorList>
    </citation>
    <scope>NUCLEOTIDE SEQUENCE [LARGE SCALE MRNA] OF 562-784</scope>
    <source>
        <strain>cv. Columbia</strain>
    </source>
</reference>
<reference key="5">
    <citation type="submission" date="2005-03" db="EMBL/GenBank/DDBJ databases">
        <title>Large-scale analysis of RIKEN Arabidopsis full-length (RAFL) cDNAs.</title>
        <authorList>
            <person name="Totoki Y."/>
            <person name="Seki M."/>
            <person name="Ishida J."/>
            <person name="Nakajima M."/>
            <person name="Enju A."/>
            <person name="Kamiya A."/>
            <person name="Narusaka M."/>
            <person name="Shin-i T."/>
            <person name="Nakagawa M."/>
            <person name="Sakamoto N."/>
            <person name="Oishi K."/>
            <person name="Kohara Y."/>
            <person name="Kobayashi M."/>
            <person name="Toyoda A."/>
            <person name="Sakaki Y."/>
            <person name="Sakurai T."/>
            <person name="Iida K."/>
            <person name="Akiyama K."/>
            <person name="Satou M."/>
            <person name="Toyoda T."/>
            <person name="Konagaya A."/>
            <person name="Carninci P."/>
            <person name="Kawai J."/>
            <person name="Hayashizaki Y."/>
            <person name="Shinozaki K."/>
        </authorList>
    </citation>
    <scope>NUCLEOTIDE SEQUENCE [LARGE SCALE MRNA] OF 562-784</scope>
    <source>
        <strain>cv. Columbia</strain>
    </source>
</reference>
<reference key="6">
    <citation type="journal article" date="2003" name="Science">
        <title>Empirical analysis of transcriptional activity in the Arabidopsis genome.</title>
        <authorList>
            <person name="Yamada K."/>
            <person name="Lim J."/>
            <person name="Dale J.M."/>
            <person name="Chen H."/>
            <person name="Shinn P."/>
            <person name="Palm C.J."/>
            <person name="Southwick A.M."/>
            <person name="Wu H.C."/>
            <person name="Kim C.J."/>
            <person name="Nguyen M."/>
            <person name="Pham P.K."/>
            <person name="Cheuk R.F."/>
            <person name="Karlin-Newmann G."/>
            <person name="Liu S.X."/>
            <person name="Lam B."/>
            <person name="Sakano H."/>
            <person name="Wu T."/>
            <person name="Yu G."/>
            <person name="Miranda M."/>
            <person name="Quach H.L."/>
            <person name="Tripp M."/>
            <person name="Chang C.H."/>
            <person name="Lee J.M."/>
            <person name="Toriumi M.J."/>
            <person name="Chan M.M."/>
            <person name="Tang C.C."/>
            <person name="Onodera C.S."/>
            <person name="Deng J.M."/>
            <person name="Akiyama K."/>
            <person name="Ansari Y."/>
            <person name="Arakawa T."/>
            <person name="Banh J."/>
            <person name="Banno F."/>
            <person name="Bowser L."/>
            <person name="Brooks S.Y."/>
            <person name="Carninci P."/>
            <person name="Chao Q."/>
            <person name="Choy N."/>
            <person name="Enju A."/>
            <person name="Goldsmith A.D."/>
            <person name="Gurjal M."/>
            <person name="Hansen N.F."/>
            <person name="Hayashizaki Y."/>
            <person name="Johnson-Hopson C."/>
            <person name="Hsuan V.W."/>
            <person name="Iida K."/>
            <person name="Karnes M."/>
            <person name="Khan S."/>
            <person name="Koesema E."/>
            <person name="Ishida J."/>
            <person name="Jiang P.X."/>
            <person name="Jones T."/>
            <person name="Kawai J."/>
            <person name="Kamiya A."/>
            <person name="Meyers C."/>
            <person name="Nakajima M."/>
            <person name="Narusaka M."/>
            <person name="Seki M."/>
            <person name="Sakurai T."/>
            <person name="Satou M."/>
            <person name="Tamse R."/>
            <person name="Vaysberg M."/>
            <person name="Wallender E.K."/>
            <person name="Wong C."/>
            <person name="Yamamura Y."/>
            <person name="Yuan S."/>
            <person name="Shinozaki K."/>
            <person name="Davis R.W."/>
            <person name="Theologis A."/>
            <person name="Ecker J.R."/>
        </authorList>
    </citation>
    <scope>NUCLEOTIDE SEQUENCE [LARGE SCALE MRNA] OF 565-784</scope>
    <source>
        <strain>cv. Columbia</strain>
    </source>
</reference>
<reference key="7">
    <citation type="book" date="1998" name="Proceedings of the 9th international conference on Arabidopsis research">
        <title>Structural and functional analysis of the receptor-like kinase genes expressed at Arabidopsis inflorescence.</title>
        <authorList>
            <person name="Takemura M."/>
            <person name="Kohchi T."/>
            <person name="Kanamoto H."/>
            <person name="Asai T."/>
            <person name="Nemoto K."/>
            <person name="Yokota A."/>
        </authorList>
    </citation>
    <scope>TISSUE SPECIFICITY</scope>
</reference>
<reference key="8">
    <citation type="book" date="1999" name="Proceedings of the 10th international conference on Arabidopsis research">
        <title>Analysis of the receptor-like kinase gene expressed in the meristems.</title>
        <authorList>
            <person name="Takemura M."/>
            <person name="Kanamoto H."/>
            <person name="Hasegawa M."/>
            <person name="Yokota A."/>
            <person name="Kohchi T."/>
        </authorList>
    </citation>
    <scope>TISSUE SPECIFICITY</scope>
    <scope>SUBCELLULAR LOCATION</scope>
</reference>
<reference key="9">
    <citation type="book" date="2000" name="Proceedings of the 11th international conference on Arabidopsis research">
        <title>Functional analysis of the receptor-like kinase gene expressed in both shoot and root apical meristems.</title>
        <authorList>
            <person name="Takemura M."/>
            <person name="Tani E."/>
            <person name="Takeda Y."/>
            <person name="Yokota A."/>
            <person name="Kohchi T."/>
        </authorList>
    </citation>
    <scope>FUNCTION</scope>
    <scope>AUTOPHOSPHORYLATION</scope>
    <scope>INTERACTION WITH AGL24</scope>
    <scope>ACTIVITY</scope>
</reference>
<evidence type="ECO:0000255" key="1"/>
<evidence type="ECO:0000255" key="2">
    <source>
        <dbReference type="PROSITE-ProRule" id="PRU00159"/>
    </source>
</evidence>
<evidence type="ECO:0000256" key="3">
    <source>
        <dbReference type="SAM" id="MobiDB-lite"/>
    </source>
</evidence>
<evidence type="ECO:0000269" key="4">
    <source ref="7"/>
</evidence>
<evidence type="ECO:0000269" key="5">
    <source ref="8"/>
</evidence>
<evidence type="ECO:0000269" key="6">
    <source ref="9"/>
</evidence>
<evidence type="ECO:0000305" key="7"/>
<gene>
    <name type="primary">IMK3</name>
    <name type="synonym">MRLK</name>
    <name type="ordered locus">At3g56100</name>
    <name type="ORF">F18O21.60</name>
</gene>
<feature type="signal peptide" evidence="1">
    <location>
        <begin position="1"/>
        <end position="48"/>
    </location>
</feature>
<feature type="chain" id="PRO_0000389458" description="Probable leucine-rich repeat receptor-like protein kinase IMK3">
    <location>
        <begin position="49"/>
        <end position="784"/>
    </location>
</feature>
<feature type="topological domain" description="Extracellular" evidence="1">
    <location>
        <begin position="49"/>
        <end position="409"/>
    </location>
</feature>
<feature type="transmembrane region" description="Helical" evidence="1">
    <location>
        <begin position="410"/>
        <end position="430"/>
    </location>
</feature>
<feature type="topological domain" description="Cytoplasmic" evidence="1">
    <location>
        <begin position="431"/>
        <end position="784"/>
    </location>
</feature>
<feature type="repeat" description="LRR 1">
    <location>
        <begin position="126"/>
        <end position="148"/>
    </location>
</feature>
<feature type="repeat" description="LRR 2">
    <location>
        <begin position="150"/>
        <end position="172"/>
    </location>
</feature>
<feature type="repeat" description="LRR 3">
    <location>
        <begin position="174"/>
        <end position="197"/>
    </location>
</feature>
<feature type="repeat" description="LRR 4">
    <location>
        <begin position="198"/>
        <end position="220"/>
    </location>
</feature>
<feature type="repeat" description="LRR 5">
    <location>
        <begin position="222"/>
        <end position="242"/>
    </location>
</feature>
<feature type="repeat" description="LRR 6">
    <location>
        <begin position="247"/>
        <end position="268"/>
    </location>
</feature>
<feature type="repeat" description="LRR 7">
    <location>
        <begin position="271"/>
        <end position="294"/>
    </location>
</feature>
<feature type="repeat" description="LRR 8">
    <location>
        <begin position="295"/>
        <end position="317"/>
    </location>
</feature>
<feature type="repeat" description="LRR 9">
    <location>
        <begin position="319"/>
        <end position="342"/>
    </location>
</feature>
<feature type="repeat" description="LRR 10">
    <location>
        <begin position="343"/>
        <end position="365"/>
    </location>
</feature>
<feature type="domain" description="Protein kinase" evidence="2">
    <location>
        <begin position="488"/>
        <end position="773"/>
    </location>
</feature>
<feature type="region of interest" description="Disordered" evidence="3">
    <location>
        <begin position="441"/>
        <end position="467"/>
    </location>
</feature>
<feature type="region of interest" description="Disordered" evidence="3">
    <location>
        <begin position="760"/>
        <end position="784"/>
    </location>
</feature>
<feature type="binding site" evidence="2">
    <location>
        <begin position="494"/>
        <end position="502"/>
    </location>
    <ligand>
        <name>ATP</name>
        <dbReference type="ChEBI" id="CHEBI:30616"/>
    </ligand>
</feature>
<feature type="binding site" evidence="2">
    <location>
        <position position="516"/>
    </location>
    <ligand>
        <name>ATP</name>
        <dbReference type="ChEBI" id="CHEBI:30616"/>
    </ligand>
</feature>
<feature type="glycosylation site" description="N-linked (GlcNAc...) asparagine" evidence="1">
    <location>
        <position position="82"/>
    </location>
</feature>
<feature type="glycosylation site" description="N-linked (GlcNAc...) asparagine" evidence="1">
    <location>
        <position position="203"/>
    </location>
</feature>
<feature type="glycosylation site" description="N-linked (GlcNAc...) asparagine" evidence="1">
    <location>
        <position position="232"/>
    </location>
</feature>
<feature type="glycosylation site" description="N-linked (GlcNAc...) asparagine" evidence="1">
    <location>
        <position position="268"/>
    </location>
</feature>
<feature type="glycosylation site" description="N-linked (GlcNAc...) asparagine" evidence="1">
    <location>
        <position position="316"/>
    </location>
</feature>
<feature type="glycosylation site" description="N-linked (GlcNAc...) asparagine" evidence="1">
    <location>
        <position position="348"/>
    </location>
</feature>
<feature type="glycosylation site" description="N-linked (GlcNAc...) asparagine" evidence="1">
    <location>
        <position position="353"/>
    </location>
</feature>
<feature type="glycosylation site" description="N-linked (GlcNAc...) asparagine" evidence="1">
    <location>
        <position position="367"/>
    </location>
</feature>
<feature type="glycosylation site" description="N-linked (GlcNAc...) asparagine" evidence="1">
    <location>
        <position position="404"/>
    </location>
</feature>
<accession>C0LGP9</accession>
<accession>F4IY70</accession>
<accession>Q56WQ4</accession>
<accession>Q8GWS6</accession>
<accession>Q9LYN1</accession>
<name>IMK3_ARATH</name>
<proteinExistence type="evidence at protein level"/>
<sequence length="784" mass="84687">MEFITQNQAITSLSMINTDIDQPKASLRSRFLLHLIICLLFFVPPCSSQAWDGVVITQADYQGLQAVKQELIDPRGFLRSWNGSGFSACSGGWAGIKCAQGQVIVIQLPWKSLGGRISEKIGQLQALRKLSLHDNNLGGSIPMSLGLIPNLRGVQLFNNRLTGSIPASLGVSHFLQTLDLSNNLLSEIIPPNLADSSKLLRLNLSFNSLSGQIPVSLSRSSSLQFLALDHNNLSGPILDTWGSKSLNLRVLSLDHNSLSGPFPFSLCNLTQLQDFSFSHNRIRGTLPSELSKLTKLRKMDISGNSVSGHIPETLGNISSLIHLDLSQNKLTGEIPISISDLESLNFFNVSYNNLSGPVPTLLSQKFNSSSFVGNSLLCGYSVSTPCPTLPSPSPEKERKPSHRNLSTKDIILIASGALLIVMLILVCVLCCLLRKKANETKAKGGEAGPGAVAAKTEKGGEAEAGGETGGKLVHFDGPMAFTADDLLCATAEIMGKSTYGTVYKATLEDGSQVAVKRLREKITKSQKEFENEINVLGRIRHPNLLALRAYYLGPKGEKLVVFDYMSRGSLATFLHARGPDVHINWPTRMSLIKGMARGLFYLHTHANIIHGNLTSSNVLLDENITAKISDYGLSRLMTAAAGSSVIATAGALGYRAPELSKLKKANTKTDVYSLGVIILELLTGKSPSEALNGVDLPQWVATAVKEEWTNEVFDLELLNDVNTMGDEILNTLKLALHCVDATPSTRPEAQQVMTQLGEIRPEETTATTSEPLIDVPEASASTSQ</sequence>
<dbReference type="EC" id="2.7.11.1"/>
<dbReference type="EMBL" id="AL163763">
    <property type="protein sequence ID" value="CAB87409.1"/>
    <property type="status" value="ALT_SEQ"/>
    <property type="molecule type" value="Genomic_DNA"/>
</dbReference>
<dbReference type="EMBL" id="CP002686">
    <property type="protein sequence ID" value="AEE79477.2"/>
    <property type="molecule type" value="Genomic_DNA"/>
</dbReference>
<dbReference type="EMBL" id="FJ708740">
    <property type="protein sequence ID" value="ACN59334.1"/>
    <property type="molecule type" value="mRNA"/>
</dbReference>
<dbReference type="EMBL" id="AK118661">
    <property type="protein sequence ID" value="BAC43256.1"/>
    <property type="molecule type" value="mRNA"/>
</dbReference>
<dbReference type="EMBL" id="AK221981">
    <property type="protein sequence ID" value="BAD94529.1"/>
    <property type="status" value="ALT_INIT"/>
    <property type="molecule type" value="mRNA"/>
</dbReference>
<dbReference type="EMBL" id="BT005241">
    <property type="protein sequence ID" value="AAO63305.1"/>
    <property type="molecule type" value="mRNA"/>
</dbReference>
<dbReference type="PIR" id="T47727">
    <property type="entry name" value="T47727"/>
</dbReference>
<dbReference type="RefSeq" id="NP_001319765.1">
    <property type="nucleotide sequence ID" value="NM_001339765.1"/>
</dbReference>
<dbReference type="SMR" id="C0LGP9"/>
<dbReference type="BioGRID" id="10092">
    <property type="interactions" value="19"/>
</dbReference>
<dbReference type="IntAct" id="C0LGP9">
    <property type="interactions" value="17"/>
</dbReference>
<dbReference type="STRING" id="3702.C0LGP9"/>
<dbReference type="GlyCosmos" id="C0LGP9">
    <property type="glycosylation" value="9 sites, No reported glycans"/>
</dbReference>
<dbReference type="GlyGen" id="C0LGP9">
    <property type="glycosylation" value="10 sites"/>
</dbReference>
<dbReference type="ProteomicsDB" id="248437"/>
<dbReference type="GeneID" id="824776"/>
<dbReference type="KEGG" id="ath:AT3G56100"/>
<dbReference type="Araport" id="AT3G56100"/>
<dbReference type="TAIR" id="AT3G56100">
    <property type="gene designation" value="MRLK"/>
</dbReference>
<dbReference type="InParanoid" id="C0LGP9"/>
<dbReference type="PhylomeDB" id="C0LGP9"/>
<dbReference type="PRO" id="PR:C0LGP9"/>
<dbReference type="Proteomes" id="UP000006548">
    <property type="component" value="Chromosome 3"/>
</dbReference>
<dbReference type="ExpressionAtlas" id="C0LGP9">
    <property type="expression patterns" value="baseline and differential"/>
</dbReference>
<dbReference type="GO" id="GO:0005886">
    <property type="term" value="C:plasma membrane"/>
    <property type="evidence" value="ECO:0007669"/>
    <property type="project" value="UniProtKB-SubCell"/>
</dbReference>
<dbReference type="GO" id="GO:0005524">
    <property type="term" value="F:ATP binding"/>
    <property type="evidence" value="ECO:0007669"/>
    <property type="project" value="UniProtKB-KW"/>
</dbReference>
<dbReference type="GO" id="GO:0106310">
    <property type="term" value="F:protein serine kinase activity"/>
    <property type="evidence" value="ECO:0007669"/>
    <property type="project" value="RHEA"/>
</dbReference>
<dbReference type="GO" id="GO:0004674">
    <property type="term" value="F:protein serine/threonine kinase activity"/>
    <property type="evidence" value="ECO:0007669"/>
    <property type="project" value="UniProtKB-KW"/>
</dbReference>
<dbReference type="CDD" id="cd14066">
    <property type="entry name" value="STKc_IRAK"/>
    <property type="match status" value="1"/>
</dbReference>
<dbReference type="FunFam" id="3.30.200.20:FF:000486">
    <property type="entry name" value="Leucine-rich repeat receptor-like protein kinase"/>
    <property type="match status" value="1"/>
</dbReference>
<dbReference type="FunFam" id="3.80.10.10:FF:000111">
    <property type="entry name" value="LRR receptor-like serine/threonine-protein kinase ERECTA"/>
    <property type="match status" value="1"/>
</dbReference>
<dbReference type="FunFam" id="3.80.10.10:FF:000062">
    <property type="entry name" value="protein STRUBBELIG-RECEPTOR FAMILY 3"/>
    <property type="match status" value="1"/>
</dbReference>
<dbReference type="Gene3D" id="3.30.200.20">
    <property type="entry name" value="Phosphorylase Kinase, domain 1"/>
    <property type="match status" value="1"/>
</dbReference>
<dbReference type="Gene3D" id="3.80.10.10">
    <property type="entry name" value="Ribonuclease Inhibitor"/>
    <property type="match status" value="3"/>
</dbReference>
<dbReference type="Gene3D" id="1.10.510.10">
    <property type="entry name" value="Transferase(Phosphotransferase) domain 1"/>
    <property type="match status" value="1"/>
</dbReference>
<dbReference type="InterPro" id="IPR011009">
    <property type="entry name" value="Kinase-like_dom_sf"/>
</dbReference>
<dbReference type="InterPro" id="IPR001611">
    <property type="entry name" value="Leu-rich_rpt"/>
</dbReference>
<dbReference type="InterPro" id="IPR032675">
    <property type="entry name" value="LRR_dom_sf"/>
</dbReference>
<dbReference type="InterPro" id="IPR013210">
    <property type="entry name" value="LRR_N_plant-typ"/>
</dbReference>
<dbReference type="InterPro" id="IPR000719">
    <property type="entry name" value="Prot_kinase_dom"/>
</dbReference>
<dbReference type="InterPro" id="IPR001245">
    <property type="entry name" value="Ser-Thr/Tyr_kinase_cat_dom"/>
</dbReference>
<dbReference type="InterPro" id="IPR052451">
    <property type="entry name" value="Ser/Thr_kinase-like"/>
</dbReference>
<dbReference type="PANTHER" id="PTHR48008">
    <property type="entry name" value="LEUCINE-RICH REPEAT RECEPTOR-LIKE PROTEIN KINASE IMK3-RELATED"/>
    <property type="match status" value="1"/>
</dbReference>
<dbReference type="PANTHER" id="PTHR48008:SF6">
    <property type="entry name" value="LEUCINE-RICH REPEAT RECEPTOR-LIKE PROTEIN KINASE IMK3-RELATED"/>
    <property type="match status" value="1"/>
</dbReference>
<dbReference type="Pfam" id="PF00560">
    <property type="entry name" value="LRR_1"/>
    <property type="match status" value="2"/>
</dbReference>
<dbReference type="Pfam" id="PF13855">
    <property type="entry name" value="LRR_8"/>
    <property type="match status" value="2"/>
</dbReference>
<dbReference type="Pfam" id="PF08263">
    <property type="entry name" value="LRRNT_2"/>
    <property type="match status" value="1"/>
</dbReference>
<dbReference type="Pfam" id="PF07714">
    <property type="entry name" value="PK_Tyr_Ser-Thr"/>
    <property type="match status" value="1"/>
</dbReference>
<dbReference type="SUPFAM" id="SSF52058">
    <property type="entry name" value="L domain-like"/>
    <property type="match status" value="1"/>
</dbReference>
<dbReference type="SUPFAM" id="SSF56112">
    <property type="entry name" value="Protein kinase-like (PK-like)"/>
    <property type="match status" value="1"/>
</dbReference>
<dbReference type="PROSITE" id="PS51450">
    <property type="entry name" value="LRR"/>
    <property type="match status" value="9"/>
</dbReference>
<dbReference type="PROSITE" id="PS50011">
    <property type="entry name" value="PROTEIN_KINASE_DOM"/>
    <property type="match status" value="1"/>
</dbReference>
<comment type="function">
    <text evidence="6">Can phosphorylate AGL24.</text>
</comment>
<comment type="catalytic activity">
    <reaction>
        <text>L-seryl-[protein] + ATP = O-phospho-L-seryl-[protein] + ADP + H(+)</text>
        <dbReference type="Rhea" id="RHEA:17989"/>
        <dbReference type="Rhea" id="RHEA-COMP:9863"/>
        <dbReference type="Rhea" id="RHEA-COMP:11604"/>
        <dbReference type="ChEBI" id="CHEBI:15378"/>
        <dbReference type="ChEBI" id="CHEBI:29999"/>
        <dbReference type="ChEBI" id="CHEBI:30616"/>
        <dbReference type="ChEBI" id="CHEBI:83421"/>
        <dbReference type="ChEBI" id="CHEBI:456216"/>
        <dbReference type="EC" id="2.7.11.1"/>
    </reaction>
</comment>
<comment type="catalytic activity">
    <reaction>
        <text>L-threonyl-[protein] + ATP = O-phospho-L-threonyl-[protein] + ADP + H(+)</text>
        <dbReference type="Rhea" id="RHEA:46608"/>
        <dbReference type="Rhea" id="RHEA-COMP:11060"/>
        <dbReference type="Rhea" id="RHEA-COMP:11605"/>
        <dbReference type="ChEBI" id="CHEBI:15378"/>
        <dbReference type="ChEBI" id="CHEBI:30013"/>
        <dbReference type="ChEBI" id="CHEBI:30616"/>
        <dbReference type="ChEBI" id="CHEBI:61977"/>
        <dbReference type="ChEBI" id="CHEBI:456216"/>
        <dbReference type="EC" id="2.7.11.1"/>
    </reaction>
</comment>
<comment type="subunit">
    <text evidence="6">Interacts with AGL24.</text>
</comment>
<comment type="interaction">
    <interactant intactId="EBI-20664977">
        <id>C0LGP9</id>
    </interactant>
    <interactant intactId="EBI-16955068">
        <id>Q9SN80</id>
        <label>F1P2.130</label>
    </interactant>
    <organismsDiffer>false</organismsDiffer>
    <experiments>2</experiments>
</comment>
<comment type="subcellular location">
    <subcellularLocation>
        <location evidence="5">Cell membrane</location>
        <topology evidence="5">Single-pass type I membrane protein</topology>
    </subcellularLocation>
</comment>
<comment type="tissue specificity">
    <text evidence="4 5">Expressed in meristems, including roots, vegetative, inflorescence and floral meristems, and in embryos.</text>
</comment>
<comment type="domain">
    <text>The protein kinase domain is predicted to be catalytically inactive. Lacks the conserved Asp active site at position 612, which is replaced by an Asn residue. However, according to Ref.9, the kinase activity is conserved.</text>
</comment>
<comment type="PTM">
    <text>Autophosphorylated.</text>
</comment>
<comment type="similarity">
    <text evidence="2">Belongs to the protein kinase superfamily. Ser/Thr protein kinase family.</text>
</comment>
<comment type="sequence caution" evidence="7">
    <conflict type="erroneous initiation">
        <sequence resource="EMBL-CDS" id="BAD94529"/>
    </conflict>
</comment>
<comment type="sequence caution" evidence="7">
    <conflict type="erroneous gene model prediction">
        <sequence resource="EMBL-CDS" id="CAB87409"/>
    </conflict>
</comment>
<comment type="sequence caution" evidence="7">
    <conflict type="frameshift">
        <sequence resource="EMBL-CDS" id="CAB87409"/>
    </conflict>
</comment>
<keyword id="KW-0067">ATP-binding</keyword>
<keyword id="KW-1003">Cell membrane</keyword>
<keyword id="KW-0325">Glycoprotein</keyword>
<keyword id="KW-0418">Kinase</keyword>
<keyword id="KW-0433">Leucine-rich repeat</keyword>
<keyword id="KW-0472">Membrane</keyword>
<keyword id="KW-0547">Nucleotide-binding</keyword>
<keyword id="KW-0597">Phosphoprotein</keyword>
<keyword id="KW-0675">Receptor</keyword>
<keyword id="KW-1185">Reference proteome</keyword>
<keyword id="KW-0677">Repeat</keyword>
<keyword id="KW-0723">Serine/threonine-protein kinase</keyword>
<keyword id="KW-0732">Signal</keyword>
<keyword id="KW-0808">Transferase</keyword>
<keyword id="KW-0812">Transmembrane</keyword>
<keyword id="KW-1133">Transmembrane helix</keyword>
<protein>
    <recommendedName>
        <fullName>Probable leucine-rich repeat receptor-like protein kinase IMK3</fullName>
        <ecNumber>2.7.11.1</ecNumber>
    </recommendedName>
    <alternativeName>
        <fullName>Protein INFLORESCENCE MERISTEM RECEPTOR-LIKE KINASE 3</fullName>
    </alternativeName>
    <alternativeName>
        <fullName>Protein MERISTEMATIC RECEPTOR-LIKE KINASE</fullName>
    </alternativeName>
</protein>